<organism>
    <name type="scientific">Dictyostelium discoideum</name>
    <name type="common">Social amoeba</name>
    <dbReference type="NCBI Taxonomy" id="44689"/>
    <lineage>
        <taxon>Eukaryota</taxon>
        <taxon>Amoebozoa</taxon>
        <taxon>Evosea</taxon>
        <taxon>Eumycetozoa</taxon>
        <taxon>Dictyostelia</taxon>
        <taxon>Dictyosteliales</taxon>
        <taxon>Dictyosteliaceae</taxon>
        <taxon>Dictyostelium</taxon>
    </lineage>
</organism>
<reference key="1">
    <citation type="journal article" date="2005" name="Nature">
        <title>The genome of the social amoeba Dictyostelium discoideum.</title>
        <authorList>
            <person name="Eichinger L."/>
            <person name="Pachebat J.A."/>
            <person name="Gloeckner G."/>
            <person name="Rajandream M.A."/>
            <person name="Sucgang R."/>
            <person name="Berriman M."/>
            <person name="Song J."/>
            <person name="Olsen R."/>
            <person name="Szafranski K."/>
            <person name="Xu Q."/>
            <person name="Tunggal B."/>
            <person name="Kummerfeld S."/>
            <person name="Madera M."/>
            <person name="Konfortov B.A."/>
            <person name="Rivero F."/>
            <person name="Bankier A.T."/>
            <person name="Lehmann R."/>
            <person name="Hamlin N."/>
            <person name="Davies R."/>
            <person name="Gaudet P."/>
            <person name="Fey P."/>
            <person name="Pilcher K."/>
            <person name="Chen G."/>
            <person name="Saunders D."/>
            <person name="Sodergren E.J."/>
            <person name="Davis P."/>
            <person name="Kerhornou A."/>
            <person name="Nie X."/>
            <person name="Hall N."/>
            <person name="Anjard C."/>
            <person name="Hemphill L."/>
            <person name="Bason N."/>
            <person name="Farbrother P."/>
            <person name="Desany B."/>
            <person name="Just E."/>
            <person name="Morio T."/>
            <person name="Rost R."/>
            <person name="Churcher C.M."/>
            <person name="Cooper J."/>
            <person name="Haydock S."/>
            <person name="van Driessche N."/>
            <person name="Cronin A."/>
            <person name="Goodhead I."/>
            <person name="Muzny D.M."/>
            <person name="Mourier T."/>
            <person name="Pain A."/>
            <person name="Lu M."/>
            <person name="Harper D."/>
            <person name="Lindsay R."/>
            <person name="Hauser H."/>
            <person name="James K.D."/>
            <person name="Quiles M."/>
            <person name="Madan Babu M."/>
            <person name="Saito T."/>
            <person name="Buchrieser C."/>
            <person name="Wardroper A."/>
            <person name="Felder M."/>
            <person name="Thangavelu M."/>
            <person name="Johnson D."/>
            <person name="Knights A."/>
            <person name="Loulseged H."/>
            <person name="Mungall K.L."/>
            <person name="Oliver K."/>
            <person name="Price C."/>
            <person name="Quail M.A."/>
            <person name="Urushihara H."/>
            <person name="Hernandez J."/>
            <person name="Rabbinowitsch E."/>
            <person name="Steffen D."/>
            <person name="Sanders M."/>
            <person name="Ma J."/>
            <person name="Kohara Y."/>
            <person name="Sharp S."/>
            <person name="Simmonds M.N."/>
            <person name="Spiegler S."/>
            <person name="Tivey A."/>
            <person name="Sugano S."/>
            <person name="White B."/>
            <person name="Walker D."/>
            <person name="Woodward J.R."/>
            <person name="Winckler T."/>
            <person name="Tanaka Y."/>
            <person name="Shaulsky G."/>
            <person name="Schleicher M."/>
            <person name="Weinstock G.M."/>
            <person name="Rosenthal A."/>
            <person name="Cox E.C."/>
            <person name="Chisholm R.L."/>
            <person name="Gibbs R.A."/>
            <person name="Loomis W.F."/>
            <person name="Platzer M."/>
            <person name="Kay R.R."/>
            <person name="Williams J.G."/>
            <person name="Dear P.H."/>
            <person name="Noegel A.A."/>
            <person name="Barrell B.G."/>
            <person name="Kuspa A."/>
        </authorList>
    </citation>
    <scope>NUCLEOTIDE SEQUENCE [LARGE SCALE GENOMIC DNA]</scope>
    <source>
        <strain>AX4</strain>
    </source>
</reference>
<accession>Q54P65</accession>
<feature type="chain" id="PRO_0000330483" description="Uncharacterized protein DDB_G0284767">
    <location>
        <begin position="1"/>
        <end position="757"/>
    </location>
</feature>
<sequence>MKYGVKYEIDQSIPNDLPDFPFIDEKDYPSERWEITLKDQDTIIFSFNFLYIGKFLNEIKRYCKNRIITFETNIPKENNFYLLYHFIIWKNKNNWCEDSKVLIFKNSMIFIFCETRIKIDIDNNEIIIKSNPKTDTTLELKMSKFLENLKEKPLQVKNYYYFFTILSKVSNSVLINDDGFDIWIYSLEYPLFIIAKNGTGKTRFLKKVFTNSGILKCKQSIYLNEFMVLSFSNGVNNEEVKFFEEFLNVYKAHSMLSTLNNKGFLTKYIWNSINEVLKSNNLPFSLLPSDLKSDRLLFKMDDVTLYYHDLSSGEKTLFIVFALIVFYQDNYSGIADEEVLLLLDEIETTLHAQSLRVLFNAIHKQRNNLKIIMSTHNSTSLRIASEYGFHYYLLEKSLTISDGNSVKIKELKSHENAISYVSDGMLSVVDSSKLVFVEDDDDSKFYEIAYKKLFNYPHTTRLVFCNAGIKNNSQHDLNQVSLILKKMDGNDENVKSIQKLINTLKETNTIGGKTSVKEKVKLLSEKSVTEESFRLGNSQIIGLLDKDDGKNEGEFLITIDYYSYEMFLCSPLVLFYMIKNEFLKTSPDSHLSTITTTTPSSQEINTNLSQQDMVCFVIEKLIEKEVETKNRETNKTWKEYLDIFYEGIRSTTLFDVKLENQAIIKVPEIFINGFGKKGKGHNLFDTLVRIFAFGLNMQESTEKLKIKTLEAFEKMSTDNIPSCLRDTFLKVMNYSLKKITNNNNNNNNNNNNNKIKN</sequence>
<dbReference type="EMBL" id="AAFI02000071">
    <property type="protein sequence ID" value="EAL65036.1"/>
    <property type="molecule type" value="Genomic_DNA"/>
</dbReference>
<dbReference type="RefSeq" id="XP_638393.1">
    <property type="nucleotide sequence ID" value="XM_633301.1"/>
</dbReference>
<dbReference type="SMR" id="Q54P65"/>
<dbReference type="FunCoup" id="Q54P65">
    <property type="interactions" value="640"/>
</dbReference>
<dbReference type="PaxDb" id="44689-DDB0266475"/>
<dbReference type="EnsemblProtists" id="EAL65036">
    <property type="protein sequence ID" value="EAL65036"/>
    <property type="gene ID" value="DDB_G0284767"/>
</dbReference>
<dbReference type="GeneID" id="8624762"/>
<dbReference type="KEGG" id="ddi:DDB_G0284767"/>
<dbReference type="dictyBase" id="DDB_G0284767"/>
<dbReference type="VEuPathDB" id="AmoebaDB:DDB_G0284767"/>
<dbReference type="eggNOG" id="ENOG502RBR6">
    <property type="taxonomic scope" value="Eukaryota"/>
</dbReference>
<dbReference type="HOGENOM" id="CLU_368212_0_0_1"/>
<dbReference type="InParanoid" id="Q54P65"/>
<dbReference type="OMA" id="IETNIAY"/>
<dbReference type="PRO" id="PR:Q54P65"/>
<dbReference type="Proteomes" id="UP000002195">
    <property type="component" value="Chromosome 4"/>
</dbReference>
<dbReference type="GO" id="GO:0005524">
    <property type="term" value="F:ATP binding"/>
    <property type="evidence" value="ECO:0007669"/>
    <property type="project" value="InterPro"/>
</dbReference>
<dbReference type="GO" id="GO:0016887">
    <property type="term" value="F:ATP hydrolysis activity"/>
    <property type="evidence" value="ECO:0007669"/>
    <property type="project" value="InterPro"/>
</dbReference>
<dbReference type="Gene3D" id="3.40.50.300">
    <property type="entry name" value="P-loop containing nucleotide triphosphate hydrolases"/>
    <property type="match status" value="1"/>
</dbReference>
<dbReference type="InterPro" id="IPR003959">
    <property type="entry name" value="ATPase_AAA_core"/>
</dbReference>
<dbReference type="InterPro" id="IPR027417">
    <property type="entry name" value="P-loop_NTPase"/>
</dbReference>
<dbReference type="Pfam" id="PF13304">
    <property type="entry name" value="AAA_21"/>
    <property type="match status" value="1"/>
</dbReference>
<dbReference type="SUPFAM" id="SSF52540">
    <property type="entry name" value="P-loop containing nucleoside triphosphate hydrolases"/>
    <property type="match status" value="1"/>
</dbReference>
<gene>
    <name type="ORF">DDB_G0284767</name>
</gene>
<protein>
    <recommendedName>
        <fullName>Uncharacterized protein DDB_G0284767</fullName>
    </recommendedName>
</protein>
<proteinExistence type="predicted"/>
<keyword id="KW-1185">Reference proteome</keyword>
<name>Y6475_DICDI</name>